<organism>
    <name type="scientific">Clostridium botulinum (strain Eklund 17B / Type B)</name>
    <dbReference type="NCBI Taxonomy" id="935198"/>
    <lineage>
        <taxon>Bacteria</taxon>
        <taxon>Bacillati</taxon>
        <taxon>Bacillota</taxon>
        <taxon>Clostridia</taxon>
        <taxon>Eubacteriales</taxon>
        <taxon>Clostridiaceae</taxon>
        <taxon>Clostridium</taxon>
    </lineage>
</organism>
<dbReference type="EMBL" id="CP001056">
    <property type="protein sequence ID" value="ACD24753.1"/>
    <property type="molecule type" value="Genomic_DNA"/>
</dbReference>
<dbReference type="SMR" id="B2TMZ1"/>
<dbReference type="KEGG" id="cbk:CLL_A1022"/>
<dbReference type="PATRIC" id="fig|935198.13.peg.971"/>
<dbReference type="HOGENOM" id="CLU_087936_3_0_9"/>
<dbReference type="Proteomes" id="UP000001195">
    <property type="component" value="Chromosome"/>
</dbReference>
<dbReference type="GO" id="GO:0005737">
    <property type="term" value="C:cytoplasm"/>
    <property type="evidence" value="ECO:0007669"/>
    <property type="project" value="UniProtKB-SubCell"/>
</dbReference>
<dbReference type="GO" id="GO:0009379">
    <property type="term" value="C:Holliday junction helicase complex"/>
    <property type="evidence" value="ECO:0007669"/>
    <property type="project" value="InterPro"/>
</dbReference>
<dbReference type="GO" id="GO:0048476">
    <property type="term" value="C:Holliday junction resolvase complex"/>
    <property type="evidence" value="ECO:0007669"/>
    <property type="project" value="UniProtKB-UniRule"/>
</dbReference>
<dbReference type="GO" id="GO:0005524">
    <property type="term" value="F:ATP binding"/>
    <property type="evidence" value="ECO:0007669"/>
    <property type="project" value="InterPro"/>
</dbReference>
<dbReference type="GO" id="GO:0000400">
    <property type="term" value="F:four-way junction DNA binding"/>
    <property type="evidence" value="ECO:0007669"/>
    <property type="project" value="UniProtKB-UniRule"/>
</dbReference>
<dbReference type="GO" id="GO:0009378">
    <property type="term" value="F:four-way junction helicase activity"/>
    <property type="evidence" value="ECO:0007669"/>
    <property type="project" value="InterPro"/>
</dbReference>
<dbReference type="GO" id="GO:0006310">
    <property type="term" value="P:DNA recombination"/>
    <property type="evidence" value="ECO:0007669"/>
    <property type="project" value="UniProtKB-UniRule"/>
</dbReference>
<dbReference type="GO" id="GO:0006281">
    <property type="term" value="P:DNA repair"/>
    <property type="evidence" value="ECO:0007669"/>
    <property type="project" value="UniProtKB-UniRule"/>
</dbReference>
<dbReference type="CDD" id="cd14332">
    <property type="entry name" value="UBA_RuvA_C"/>
    <property type="match status" value="1"/>
</dbReference>
<dbReference type="Gene3D" id="1.10.150.20">
    <property type="entry name" value="5' to 3' exonuclease, C-terminal subdomain"/>
    <property type="match status" value="1"/>
</dbReference>
<dbReference type="Gene3D" id="1.10.8.10">
    <property type="entry name" value="DNA helicase RuvA subunit, C-terminal domain"/>
    <property type="match status" value="1"/>
</dbReference>
<dbReference type="Gene3D" id="2.40.50.140">
    <property type="entry name" value="Nucleic acid-binding proteins"/>
    <property type="match status" value="1"/>
</dbReference>
<dbReference type="HAMAP" id="MF_00031">
    <property type="entry name" value="DNA_HJ_migration_RuvA"/>
    <property type="match status" value="1"/>
</dbReference>
<dbReference type="InterPro" id="IPR013849">
    <property type="entry name" value="DNA_helicase_Holl-junc_RuvA_I"/>
</dbReference>
<dbReference type="InterPro" id="IPR012340">
    <property type="entry name" value="NA-bd_OB-fold"/>
</dbReference>
<dbReference type="InterPro" id="IPR000085">
    <property type="entry name" value="RuvA"/>
</dbReference>
<dbReference type="InterPro" id="IPR010994">
    <property type="entry name" value="RuvA_2-like"/>
</dbReference>
<dbReference type="InterPro" id="IPR011114">
    <property type="entry name" value="RuvA_C"/>
</dbReference>
<dbReference type="InterPro" id="IPR036267">
    <property type="entry name" value="RuvA_C_sf"/>
</dbReference>
<dbReference type="NCBIfam" id="TIGR00084">
    <property type="entry name" value="ruvA"/>
    <property type="match status" value="1"/>
</dbReference>
<dbReference type="Pfam" id="PF14520">
    <property type="entry name" value="HHH_5"/>
    <property type="match status" value="1"/>
</dbReference>
<dbReference type="Pfam" id="PF07499">
    <property type="entry name" value="RuvA_C"/>
    <property type="match status" value="1"/>
</dbReference>
<dbReference type="Pfam" id="PF01330">
    <property type="entry name" value="RuvA_N"/>
    <property type="match status" value="1"/>
</dbReference>
<dbReference type="SUPFAM" id="SSF46929">
    <property type="entry name" value="DNA helicase RuvA subunit, C-terminal domain"/>
    <property type="match status" value="1"/>
</dbReference>
<dbReference type="SUPFAM" id="SSF50249">
    <property type="entry name" value="Nucleic acid-binding proteins"/>
    <property type="match status" value="1"/>
</dbReference>
<dbReference type="SUPFAM" id="SSF47781">
    <property type="entry name" value="RuvA domain 2-like"/>
    <property type="match status" value="1"/>
</dbReference>
<comment type="function">
    <text evidence="1">The RuvA-RuvB-RuvC complex processes Holliday junction (HJ) DNA during genetic recombination and DNA repair, while the RuvA-RuvB complex plays an important role in the rescue of blocked DNA replication forks via replication fork reversal (RFR). RuvA specifically binds to HJ cruciform DNA, conferring on it an open structure. The RuvB hexamer acts as an ATP-dependent pump, pulling dsDNA into and through the RuvAB complex. HJ branch migration allows RuvC to scan DNA until it finds its consensus sequence, where it cleaves and resolves the cruciform DNA.</text>
</comment>
<comment type="subunit">
    <text evidence="1">Homotetramer. Forms an RuvA(8)-RuvB(12)-Holliday junction (HJ) complex. HJ DNA is sandwiched between 2 RuvA tetramers; dsDNA enters through RuvA and exits via RuvB. An RuvB hexamer assembles on each DNA strand where it exits the tetramer. Each RuvB hexamer is contacted by two RuvA subunits (via domain III) on 2 adjacent RuvB subunits; this complex drives branch migration. In the full resolvosome a probable DNA-RuvA(4)-RuvB(12)-RuvC(2) complex forms which resolves the HJ.</text>
</comment>
<comment type="subcellular location">
    <subcellularLocation>
        <location evidence="1">Cytoplasm</location>
    </subcellularLocation>
</comment>
<comment type="domain">
    <text evidence="1">Has three domains with a flexible linker between the domains II and III and assumes an 'L' shape. Domain III is highly mobile and contacts RuvB.</text>
</comment>
<comment type="similarity">
    <text evidence="1">Belongs to the RuvA family.</text>
</comment>
<keyword id="KW-0963">Cytoplasm</keyword>
<keyword id="KW-0227">DNA damage</keyword>
<keyword id="KW-0233">DNA recombination</keyword>
<keyword id="KW-0234">DNA repair</keyword>
<keyword id="KW-0238">DNA-binding</keyword>
<name>RUVA_CLOBB</name>
<reference key="1">
    <citation type="submission" date="2008-04" db="EMBL/GenBank/DDBJ databases">
        <title>Complete sequence of Clostridium botulinum strain Eklund.</title>
        <authorList>
            <person name="Brinkac L.M."/>
            <person name="Brown J.L."/>
            <person name="Bruce D."/>
            <person name="Detter C."/>
            <person name="Munk C."/>
            <person name="Smith L.A."/>
            <person name="Smith T.J."/>
            <person name="Sutton G."/>
            <person name="Brettin T.S."/>
        </authorList>
    </citation>
    <scope>NUCLEOTIDE SEQUENCE [LARGE SCALE GENOMIC DNA]</scope>
    <source>
        <strain>Eklund 17B / Type B</strain>
    </source>
</reference>
<proteinExistence type="inferred from homology"/>
<feature type="chain" id="PRO_1000090303" description="Holliday junction branch migration complex subunit RuvA">
    <location>
        <begin position="1"/>
        <end position="198"/>
    </location>
</feature>
<feature type="region of interest" description="Domain I" evidence="1">
    <location>
        <begin position="1"/>
        <end position="64"/>
    </location>
</feature>
<feature type="region of interest" description="Domain II" evidence="1">
    <location>
        <begin position="65"/>
        <end position="143"/>
    </location>
</feature>
<feature type="region of interest" description="Flexible linker" evidence="1">
    <location>
        <begin position="144"/>
        <end position="154"/>
    </location>
</feature>
<feature type="region of interest" description="Domain III" evidence="1">
    <location>
        <begin position="154"/>
        <end position="198"/>
    </location>
</feature>
<evidence type="ECO:0000255" key="1">
    <source>
        <dbReference type="HAMAP-Rule" id="MF_00031"/>
    </source>
</evidence>
<accession>B2TMZ1</accession>
<protein>
    <recommendedName>
        <fullName evidence="1">Holliday junction branch migration complex subunit RuvA</fullName>
    </recommendedName>
</protein>
<sequence length="198" mass="22013">MYEYIKGEYMGINKDYIIIENNGIGYKIFTSGATMSSMPCCGEKIKLYIEQIVREDFIGLYGFESLEELEMFKMLLSINGVGAKAALSLLSISRLNNLKYAIITGDEKHLCRGVGIGKKTAARIILELKDKLKTDELLNCIDEFDDVTQDNSLAVSEALSALISLGYTEKEAEKVLRDVDKSESVENIIKSALVKLMG</sequence>
<gene>
    <name evidence="1" type="primary">ruvA</name>
    <name type="ordered locus">CLL_A1022</name>
</gene>